<evidence type="ECO:0000250" key="1"/>
<evidence type="ECO:0000255" key="2">
    <source>
        <dbReference type="PROSITE-ProRule" id="PRU00192"/>
    </source>
</evidence>
<evidence type="ECO:0000256" key="3">
    <source>
        <dbReference type="SAM" id="MobiDB-lite"/>
    </source>
</evidence>
<evidence type="ECO:0000269" key="4">
    <source>
    </source>
</evidence>
<evidence type="ECO:0000269" key="5">
    <source>
    </source>
</evidence>
<evidence type="ECO:0000305" key="6"/>
<organism>
    <name type="scientific">Schizosaccharomyces pombe (strain 972 / ATCC 24843)</name>
    <name type="common">Fission yeast</name>
    <dbReference type="NCBI Taxonomy" id="284812"/>
    <lineage>
        <taxon>Eukaryota</taxon>
        <taxon>Fungi</taxon>
        <taxon>Dikarya</taxon>
        <taxon>Ascomycota</taxon>
        <taxon>Taphrinomycotina</taxon>
        <taxon>Schizosaccharomycetes</taxon>
        <taxon>Schizosaccharomycetales</taxon>
        <taxon>Schizosaccharomycetaceae</taxon>
        <taxon>Schizosaccharomyces</taxon>
    </lineage>
</organism>
<proteinExistence type="evidence at protein level"/>
<reference key="1">
    <citation type="journal article" date="2002" name="Nature">
        <title>The genome sequence of Schizosaccharomyces pombe.</title>
        <authorList>
            <person name="Wood V."/>
            <person name="Gwilliam R."/>
            <person name="Rajandream M.A."/>
            <person name="Lyne M.H."/>
            <person name="Lyne R."/>
            <person name="Stewart A."/>
            <person name="Sgouros J.G."/>
            <person name="Peat N."/>
            <person name="Hayles J."/>
            <person name="Baker S.G."/>
            <person name="Basham D."/>
            <person name="Bowman S."/>
            <person name="Brooks K."/>
            <person name="Brown D."/>
            <person name="Brown S."/>
            <person name="Chillingworth T."/>
            <person name="Churcher C.M."/>
            <person name="Collins M."/>
            <person name="Connor R."/>
            <person name="Cronin A."/>
            <person name="Davis P."/>
            <person name="Feltwell T."/>
            <person name="Fraser A."/>
            <person name="Gentles S."/>
            <person name="Goble A."/>
            <person name="Hamlin N."/>
            <person name="Harris D.E."/>
            <person name="Hidalgo J."/>
            <person name="Hodgson G."/>
            <person name="Holroyd S."/>
            <person name="Hornsby T."/>
            <person name="Howarth S."/>
            <person name="Huckle E.J."/>
            <person name="Hunt S."/>
            <person name="Jagels K."/>
            <person name="James K.D."/>
            <person name="Jones L."/>
            <person name="Jones M."/>
            <person name="Leather S."/>
            <person name="McDonald S."/>
            <person name="McLean J."/>
            <person name="Mooney P."/>
            <person name="Moule S."/>
            <person name="Mungall K.L."/>
            <person name="Murphy L.D."/>
            <person name="Niblett D."/>
            <person name="Odell C."/>
            <person name="Oliver K."/>
            <person name="O'Neil S."/>
            <person name="Pearson D."/>
            <person name="Quail M.A."/>
            <person name="Rabbinowitsch E."/>
            <person name="Rutherford K.M."/>
            <person name="Rutter S."/>
            <person name="Saunders D."/>
            <person name="Seeger K."/>
            <person name="Sharp S."/>
            <person name="Skelton J."/>
            <person name="Simmonds M.N."/>
            <person name="Squares R."/>
            <person name="Squares S."/>
            <person name="Stevens K."/>
            <person name="Taylor K."/>
            <person name="Taylor R.G."/>
            <person name="Tivey A."/>
            <person name="Walsh S.V."/>
            <person name="Warren T."/>
            <person name="Whitehead S."/>
            <person name="Woodward J.R."/>
            <person name="Volckaert G."/>
            <person name="Aert R."/>
            <person name="Robben J."/>
            <person name="Grymonprez B."/>
            <person name="Weltjens I."/>
            <person name="Vanstreels E."/>
            <person name="Rieger M."/>
            <person name="Schaefer M."/>
            <person name="Mueller-Auer S."/>
            <person name="Gabel C."/>
            <person name="Fuchs M."/>
            <person name="Duesterhoeft A."/>
            <person name="Fritzc C."/>
            <person name="Holzer E."/>
            <person name="Moestl D."/>
            <person name="Hilbert H."/>
            <person name="Borzym K."/>
            <person name="Langer I."/>
            <person name="Beck A."/>
            <person name="Lehrach H."/>
            <person name="Reinhardt R."/>
            <person name="Pohl T.M."/>
            <person name="Eger P."/>
            <person name="Zimmermann W."/>
            <person name="Wedler H."/>
            <person name="Wambutt R."/>
            <person name="Purnelle B."/>
            <person name="Goffeau A."/>
            <person name="Cadieu E."/>
            <person name="Dreano S."/>
            <person name="Gloux S."/>
            <person name="Lelaure V."/>
            <person name="Mottier S."/>
            <person name="Galibert F."/>
            <person name="Aves S.J."/>
            <person name="Xiang Z."/>
            <person name="Hunt C."/>
            <person name="Moore K."/>
            <person name="Hurst S.M."/>
            <person name="Lucas M."/>
            <person name="Rochet M."/>
            <person name="Gaillardin C."/>
            <person name="Tallada V.A."/>
            <person name="Garzon A."/>
            <person name="Thode G."/>
            <person name="Daga R.R."/>
            <person name="Cruzado L."/>
            <person name="Jimenez J."/>
            <person name="Sanchez M."/>
            <person name="del Rey F."/>
            <person name="Benito J."/>
            <person name="Dominguez A."/>
            <person name="Revuelta J.L."/>
            <person name="Moreno S."/>
            <person name="Armstrong J."/>
            <person name="Forsburg S.L."/>
            <person name="Cerutti L."/>
            <person name="Lowe T."/>
            <person name="McCombie W.R."/>
            <person name="Paulsen I."/>
            <person name="Potashkin J."/>
            <person name="Shpakovski G.V."/>
            <person name="Ussery D."/>
            <person name="Barrell B.G."/>
            <person name="Nurse P."/>
        </authorList>
    </citation>
    <scope>NUCLEOTIDE SEQUENCE [LARGE SCALE GENOMIC DNA]</scope>
    <source>
        <strain>972 / ATCC 24843</strain>
    </source>
</reference>
<reference key="2">
    <citation type="journal article" date="2006" name="Nat. Biotechnol.">
        <title>ORFeome cloning and global analysis of protein localization in the fission yeast Schizosaccharomyces pombe.</title>
        <authorList>
            <person name="Matsuyama A."/>
            <person name="Arai R."/>
            <person name="Yashiroda Y."/>
            <person name="Shirai A."/>
            <person name="Kamata A."/>
            <person name="Sekido S."/>
            <person name="Kobayashi Y."/>
            <person name="Hashimoto A."/>
            <person name="Hamamoto M."/>
            <person name="Hiraoka Y."/>
            <person name="Horinouchi S."/>
            <person name="Yoshida M."/>
        </authorList>
    </citation>
    <scope>SUBCELLULAR LOCATION [LARGE SCALE ANALYSIS]</scope>
</reference>
<reference key="3">
    <citation type="journal article" date="2008" name="J. Proteome Res.">
        <title>Phosphoproteome analysis of fission yeast.</title>
        <authorList>
            <person name="Wilson-Grady J.T."/>
            <person name="Villen J."/>
            <person name="Gygi S.P."/>
        </authorList>
    </citation>
    <scope>PHOSPHORYLATION [LARGE SCALE ANALYSIS] AT SER-213</scope>
    <scope>IDENTIFICATION BY MASS SPECTROMETRY</scope>
</reference>
<keyword id="KW-0131">Cell cycle</keyword>
<keyword id="KW-0132">Cell division</keyword>
<keyword id="KW-0597">Phosphoprotein</keyword>
<keyword id="KW-1185">Reference proteome</keyword>
<keyword id="KW-0728">SH3 domain</keyword>
<accession>O14302</accession>
<gene>
    <name type="primary">cyk3</name>
    <name type="ORF">SPAC9G1.06c</name>
</gene>
<dbReference type="EMBL" id="CU329670">
    <property type="protein sequence ID" value="CAB11490.1"/>
    <property type="molecule type" value="Genomic_DNA"/>
</dbReference>
<dbReference type="PIR" id="T39229">
    <property type="entry name" value="T39229"/>
</dbReference>
<dbReference type="RefSeq" id="NP_593561.1">
    <property type="nucleotide sequence ID" value="NM_001018994.2"/>
</dbReference>
<dbReference type="BioGRID" id="279190">
    <property type="interactions" value="48"/>
</dbReference>
<dbReference type="FunCoup" id="O14302">
    <property type="interactions" value="18"/>
</dbReference>
<dbReference type="STRING" id="284812.O14302"/>
<dbReference type="iPTMnet" id="O14302"/>
<dbReference type="PaxDb" id="4896-SPAC9G1.06c.1"/>
<dbReference type="EnsemblFungi" id="SPAC9G1.06c.1">
    <property type="protein sequence ID" value="SPAC9G1.06c.1:pep"/>
    <property type="gene ID" value="SPAC9G1.06c"/>
</dbReference>
<dbReference type="GeneID" id="2542740"/>
<dbReference type="KEGG" id="spo:2542740"/>
<dbReference type="PomBase" id="SPAC9G1.06c">
    <property type="gene designation" value="cyk3"/>
</dbReference>
<dbReference type="VEuPathDB" id="FungiDB:SPAC9G1.06c"/>
<dbReference type="eggNOG" id="KOG4575">
    <property type="taxonomic scope" value="Eukaryota"/>
</dbReference>
<dbReference type="HOGENOM" id="CLU_008674_1_0_1"/>
<dbReference type="InParanoid" id="O14302"/>
<dbReference type="OMA" id="CTPYELT"/>
<dbReference type="PhylomeDB" id="O14302"/>
<dbReference type="PRO" id="PR:O14302"/>
<dbReference type="Proteomes" id="UP000002485">
    <property type="component" value="Chromosome I"/>
</dbReference>
<dbReference type="GO" id="GO:0005938">
    <property type="term" value="C:cell cortex"/>
    <property type="evidence" value="ECO:0000314"/>
    <property type="project" value="PomBase"/>
</dbReference>
<dbReference type="GO" id="GO:0051285">
    <property type="term" value="C:cell cortex of cell tip"/>
    <property type="evidence" value="ECO:0000314"/>
    <property type="project" value="PomBase"/>
</dbReference>
<dbReference type="GO" id="GO:0140472">
    <property type="term" value="C:cell cortex of non-growing cell tip"/>
    <property type="evidence" value="ECO:0000314"/>
    <property type="project" value="PomBase"/>
</dbReference>
<dbReference type="GO" id="GO:0032153">
    <property type="term" value="C:cell division site"/>
    <property type="evidence" value="ECO:0007005"/>
    <property type="project" value="PomBase"/>
</dbReference>
<dbReference type="GO" id="GO:0051286">
    <property type="term" value="C:cell tip"/>
    <property type="evidence" value="ECO:0007005"/>
    <property type="project" value="PomBase"/>
</dbReference>
<dbReference type="GO" id="GO:0005737">
    <property type="term" value="C:cytoplasm"/>
    <property type="evidence" value="ECO:0000318"/>
    <property type="project" value="GO_Central"/>
</dbReference>
<dbReference type="GO" id="GO:0000935">
    <property type="term" value="C:division septum"/>
    <property type="evidence" value="ECO:0000314"/>
    <property type="project" value="PomBase"/>
</dbReference>
<dbReference type="GO" id="GO:0110085">
    <property type="term" value="C:mitotic actomyosin contractile ring"/>
    <property type="evidence" value="ECO:0000314"/>
    <property type="project" value="PomBase"/>
</dbReference>
<dbReference type="GO" id="GO:0120105">
    <property type="term" value="C:mitotic actomyosin contractile ring, intermediate layer"/>
    <property type="evidence" value="ECO:0000314"/>
    <property type="project" value="PomBase"/>
</dbReference>
<dbReference type="GO" id="GO:1902404">
    <property type="term" value="P:mitotic actomyosin contractile ring contraction"/>
    <property type="evidence" value="ECO:0000315"/>
    <property type="project" value="PomBase"/>
</dbReference>
<dbReference type="GO" id="GO:0140278">
    <property type="term" value="P:mitotic division septum assembly"/>
    <property type="evidence" value="ECO:0000315"/>
    <property type="project" value="PomBase"/>
</dbReference>
<dbReference type="CDD" id="cd11889">
    <property type="entry name" value="SH3_Cyk3p-like"/>
    <property type="match status" value="1"/>
</dbReference>
<dbReference type="FunFam" id="2.30.30.40:FF:000168">
    <property type="entry name" value="SH3 domain protein (Cyk3)"/>
    <property type="match status" value="1"/>
</dbReference>
<dbReference type="FunFam" id="3.10.620.30:FF:000005">
    <property type="entry name" value="SH3 domain protein (Cyk3), putative"/>
    <property type="match status" value="1"/>
</dbReference>
<dbReference type="Gene3D" id="3.10.620.30">
    <property type="match status" value="1"/>
</dbReference>
<dbReference type="Gene3D" id="2.30.30.40">
    <property type="entry name" value="SH3 Domains"/>
    <property type="match status" value="1"/>
</dbReference>
<dbReference type="InterPro" id="IPR052557">
    <property type="entry name" value="CAP/Cytokinesis_protein"/>
</dbReference>
<dbReference type="InterPro" id="IPR035553">
    <property type="entry name" value="Cyk3_SH3"/>
</dbReference>
<dbReference type="InterPro" id="IPR056409">
    <property type="entry name" value="Ig_CYK3_C"/>
</dbReference>
<dbReference type="InterPro" id="IPR038765">
    <property type="entry name" value="Papain-like_cys_pep_sf"/>
</dbReference>
<dbReference type="InterPro" id="IPR036028">
    <property type="entry name" value="SH3-like_dom_sf"/>
</dbReference>
<dbReference type="InterPro" id="IPR001452">
    <property type="entry name" value="SH3_domain"/>
</dbReference>
<dbReference type="InterPro" id="IPR002931">
    <property type="entry name" value="Transglutaminase-like"/>
</dbReference>
<dbReference type="PANTHER" id="PTHR46333">
    <property type="entry name" value="CYTOKINESIS PROTEIN 3"/>
    <property type="match status" value="1"/>
</dbReference>
<dbReference type="PANTHER" id="PTHR46333:SF2">
    <property type="entry name" value="CYTOKINESIS PROTEIN 3"/>
    <property type="match status" value="1"/>
</dbReference>
<dbReference type="Pfam" id="PF24584">
    <property type="entry name" value="Ig_CYK3_C"/>
    <property type="match status" value="1"/>
</dbReference>
<dbReference type="Pfam" id="PF00018">
    <property type="entry name" value="SH3_1"/>
    <property type="match status" value="1"/>
</dbReference>
<dbReference type="Pfam" id="PF01841">
    <property type="entry name" value="Transglut_core"/>
    <property type="match status" value="1"/>
</dbReference>
<dbReference type="SMART" id="SM00326">
    <property type="entry name" value="SH3"/>
    <property type="match status" value="1"/>
</dbReference>
<dbReference type="SMART" id="SM00460">
    <property type="entry name" value="TGc"/>
    <property type="match status" value="1"/>
</dbReference>
<dbReference type="SUPFAM" id="SSF54001">
    <property type="entry name" value="Cysteine proteinases"/>
    <property type="match status" value="1"/>
</dbReference>
<dbReference type="SUPFAM" id="SSF50044">
    <property type="entry name" value="SH3-domain"/>
    <property type="match status" value="1"/>
</dbReference>
<dbReference type="PROSITE" id="PS50002">
    <property type="entry name" value="SH3"/>
    <property type="match status" value="1"/>
</dbReference>
<name>CYK3_SCHPO</name>
<comment type="function">
    <text evidence="1">Involved in cytokinesis.</text>
</comment>
<comment type="subcellular location">
    <subcellularLocation>
        <location evidence="4">Cell tip</location>
    </subcellularLocation>
    <text evidence="4">Also at the division site.</text>
</comment>
<comment type="similarity">
    <text evidence="6">Belongs to the CYK3 family.</text>
</comment>
<feature type="chain" id="PRO_0000116705" description="cytokinesis protein 3">
    <location>
        <begin position="1"/>
        <end position="886"/>
    </location>
</feature>
<feature type="domain" description="SH3" evidence="2">
    <location>
        <begin position="6"/>
        <end position="67"/>
    </location>
</feature>
<feature type="region of interest" description="Disordered" evidence="3">
    <location>
        <begin position="72"/>
        <end position="189"/>
    </location>
</feature>
<feature type="region of interest" description="Disordered" evidence="3">
    <location>
        <begin position="219"/>
        <end position="290"/>
    </location>
</feature>
<feature type="region of interest" description="Disordered" evidence="3">
    <location>
        <begin position="358"/>
        <end position="393"/>
    </location>
</feature>
<feature type="compositionally biased region" description="Low complexity" evidence="3">
    <location>
        <begin position="72"/>
        <end position="88"/>
    </location>
</feature>
<feature type="compositionally biased region" description="Polar residues" evidence="3">
    <location>
        <begin position="89"/>
        <end position="104"/>
    </location>
</feature>
<feature type="compositionally biased region" description="Low complexity" evidence="3">
    <location>
        <begin position="135"/>
        <end position="154"/>
    </location>
</feature>
<feature type="compositionally biased region" description="Polar residues" evidence="3">
    <location>
        <begin position="155"/>
        <end position="188"/>
    </location>
</feature>
<feature type="compositionally biased region" description="Polar residues" evidence="3">
    <location>
        <begin position="253"/>
        <end position="264"/>
    </location>
</feature>
<feature type="modified residue" description="Phosphoserine" evidence="5">
    <location>
        <position position="213"/>
    </location>
</feature>
<sequence>MSIPKQLPCMVRALYAWPGEREGDLKFTEGDLIECLSIGDGKWWIGRHINTNTQGIFPSNFVHCLDIPTVRPGSSMSRTSASSFRYSSPQKSSIDTPITSSDQGLTPDLVGSSNALNKPTRESDSLKHQKSHPMLNSLGSSLSLKKSVSRPPSSMSRTNLDVSSRWDNTADNDSQIDAQDLSRSTPSPLRSAMENVLQSLNAMGKKSFSRANSPLLRLTKSTTTSKETDFIPVPPAHGSTSMTSRSKLDDSTDNSSKPRTSLQPGESPMKSSRDISRKPSMASSVLSPSDYFPQHRRFQSAPAPIPRPVSTLIPLTQVRTTASNVIKPRPQTTERPSTAQSFRKGGGFLKKTFKKLLRRGSSKRKPSLQPTPPVSYPAHNVPQKGVRPASPHTLKSVKDDLKRTKTYTKAEFAAKREEIFNKLSMPVYEPLKDLSECIGNVLADGEPVQFSVGTNIHNMNFSAIDKQIRSIIPQRVQVSPAVLAKNYLAPGQTTALAQMRAVFIYISERITFTNQTLDNDELRTSTQVISEGQGTPFEVALLVKEMLQALDLWCEVIEGYLKSPDDIYYTRDININHAWNVVTFDNEVRLIDASFASPTHPQQALKSSSSNDFYFLMKPNECIFTHVPENPDQQFIMPDLSMPIVMALPWVSSVYFTLGLKLRKFNTSILHLNDLEVLQIEFLAPKDIECVAEVDALSALAPTADVSQCYKYTLTQAFWETPDIRVMRVKAVMPANNRAAVLRIYAGRLGVSSPVRTAPHPMAMSLPFVHHGKNKALEFVTRHPVPHCPSVDLYINSPQCGTLHSGVEYKFNVSAYACQPSTSISNTRLAIQTPTGNIVRLREERSGNGVIFFSLSLTINETGEYRALILAEKIGRWVVYATWQAV</sequence>
<protein>
    <recommendedName>
        <fullName>cytokinesis protein 3</fullName>
    </recommendedName>
</protein>